<gene>
    <name evidence="1" type="primary">rraA</name>
    <name type="ordered locus">EcSMS35_4371</name>
</gene>
<feature type="chain" id="PRO_1000194856" description="Regulator of ribonuclease activity A">
    <location>
        <begin position="1"/>
        <end position="161"/>
    </location>
</feature>
<comment type="function">
    <text evidence="1">Globally modulates RNA abundance by binding to RNase E (Rne) and regulating its endonucleolytic activity. Can modulate Rne action in a substrate-dependent manner by altering the composition of the degradosome. Modulates RNA-binding and helicase activities of the degradosome.</text>
</comment>
<comment type="subunit">
    <text evidence="1">Homotrimer. Binds to both RNA-binding sites in the C-terminal region of Rne and to RhlB.</text>
</comment>
<comment type="subcellular location">
    <subcellularLocation>
        <location evidence="1">Cytoplasm</location>
    </subcellularLocation>
</comment>
<comment type="similarity">
    <text evidence="1">Belongs to the RraA family.</text>
</comment>
<accession>B1LNN4</accession>
<reference key="1">
    <citation type="journal article" date="2008" name="J. Bacteriol.">
        <title>Insights into the environmental resistance gene pool from the genome sequence of the multidrug-resistant environmental isolate Escherichia coli SMS-3-5.</title>
        <authorList>
            <person name="Fricke W.F."/>
            <person name="Wright M.S."/>
            <person name="Lindell A.H."/>
            <person name="Harkins D.M."/>
            <person name="Baker-Austin C."/>
            <person name="Ravel J."/>
            <person name="Stepanauskas R."/>
        </authorList>
    </citation>
    <scope>NUCLEOTIDE SEQUENCE [LARGE SCALE GENOMIC DNA]</scope>
    <source>
        <strain>SMS-3-5 / SECEC</strain>
    </source>
</reference>
<proteinExistence type="inferred from homology"/>
<evidence type="ECO:0000255" key="1">
    <source>
        <dbReference type="HAMAP-Rule" id="MF_00471"/>
    </source>
</evidence>
<dbReference type="EMBL" id="CP000970">
    <property type="protein sequence ID" value="ACB19997.1"/>
    <property type="molecule type" value="Genomic_DNA"/>
</dbReference>
<dbReference type="RefSeq" id="WP_000872908.1">
    <property type="nucleotide sequence ID" value="NC_010498.1"/>
</dbReference>
<dbReference type="SMR" id="B1LNN4"/>
<dbReference type="GeneID" id="93777969"/>
<dbReference type="KEGG" id="ecm:EcSMS35_4371"/>
<dbReference type="HOGENOM" id="CLU_072626_4_0_6"/>
<dbReference type="Proteomes" id="UP000007011">
    <property type="component" value="Chromosome"/>
</dbReference>
<dbReference type="GO" id="GO:0005829">
    <property type="term" value="C:cytosol"/>
    <property type="evidence" value="ECO:0007669"/>
    <property type="project" value="TreeGrafter"/>
</dbReference>
<dbReference type="GO" id="GO:0060698">
    <property type="term" value="F:endoribonuclease inhibitor activity"/>
    <property type="evidence" value="ECO:0007669"/>
    <property type="project" value="UniProtKB-UniRule"/>
</dbReference>
<dbReference type="GO" id="GO:0019899">
    <property type="term" value="F:enzyme binding"/>
    <property type="evidence" value="ECO:0007669"/>
    <property type="project" value="UniProtKB-UniRule"/>
</dbReference>
<dbReference type="GO" id="GO:1902369">
    <property type="term" value="P:negative regulation of RNA catabolic process"/>
    <property type="evidence" value="ECO:0007669"/>
    <property type="project" value="TreeGrafter"/>
</dbReference>
<dbReference type="CDD" id="cd16841">
    <property type="entry name" value="RraA_family"/>
    <property type="match status" value="1"/>
</dbReference>
<dbReference type="FunFam" id="3.50.30.40:FF:000001">
    <property type="entry name" value="Regulator of ribonuclease activity A"/>
    <property type="match status" value="1"/>
</dbReference>
<dbReference type="Gene3D" id="3.50.30.40">
    <property type="entry name" value="Ribonuclease E inhibitor RraA/RraA-like"/>
    <property type="match status" value="1"/>
</dbReference>
<dbReference type="HAMAP" id="MF_00471">
    <property type="entry name" value="RraA"/>
    <property type="match status" value="1"/>
</dbReference>
<dbReference type="InterPro" id="IPR010203">
    <property type="entry name" value="RraA"/>
</dbReference>
<dbReference type="InterPro" id="IPR005493">
    <property type="entry name" value="RraA/RraA-like"/>
</dbReference>
<dbReference type="InterPro" id="IPR036704">
    <property type="entry name" value="RraA/RraA-like_sf"/>
</dbReference>
<dbReference type="InterPro" id="IPR014339">
    <property type="entry name" value="RraA_gpbac"/>
</dbReference>
<dbReference type="NCBIfam" id="TIGR01935">
    <property type="entry name" value="NOT-MenG"/>
    <property type="match status" value="1"/>
</dbReference>
<dbReference type="NCBIfam" id="NF006875">
    <property type="entry name" value="PRK09372.1"/>
    <property type="match status" value="1"/>
</dbReference>
<dbReference type="NCBIfam" id="TIGR02998">
    <property type="entry name" value="RraA_entero"/>
    <property type="match status" value="1"/>
</dbReference>
<dbReference type="PANTHER" id="PTHR33254">
    <property type="entry name" value="4-HYDROXY-4-METHYL-2-OXOGLUTARATE ALDOLASE 3-RELATED"/>
    <property type="match status" value="1"/>
</dbReference>
<dbReference type="PANTHER" id="PTHR33254:SF29">
    <property type="entry name" value="REGULATOR OF RIBONUCLEASE ACTIVITY A"/>
    <property type="match status" value="1"/>
</dbReference>
<dbReference type="Pfam" id="PF03737">
    <property type="entry name" value="RraA-like"/>
    <property type="match status" value="1"/>
</dbReference>
<dbReference type="SUPFAM" id="SSF89562">
    <property type="entry name" value="RraA-like"/>
    <property type="match status" value="1"/>
</dbReference>
<organism>
    <name type="scientific">Escherichia coli (strain SMS-3-5 / SECEC)</name>
    <dbReference type="NCBI Taxonomy" id="439855"/>
    <lineage>
        <taxon>Bacteria</taxon>
        <taxon>Pseudomonadati</taxon>
        <taxon>Pseudomonadota</taxon>
        <taxon>Gammaproteobacteria</taxon>
        <taxon>Enterobacterales</taxon>
        <taxon>Enterobacteriaceae</taxon>
        <taxon>Escherichia</taxon>
    </lineage>
</organism>
<name>RRAA_ECOSM</name>
<sequence>MKYDTSELCDIYQEDVNVVEPLFSNFGGRASFGGQIITVKCFEDNGLLYDLLEQNGRGRVLVVDGGGSVRRALVDAELARLAVQNEWEGLVIYGAVRQVDDLEELDIGIQAMAAIPVGAAGEGIGESDVRVNFGGVTFFSGDHLYADNTGIILSEDPLDIE</sequence>
<protein>
    <recommendedName>
        <fullName evidence="1">Regulator of ribonuclease activity A</fullName>
    </recommendedName>
</protein>
<keyword id="KW-0963">Cytoplasm</keyword>